<organism>
    <name type="scientific">Brucella suis biovar 1 (strain 1330)</name>
    <dbReference type="NCBI Taxonomy" id="204722"/>
    <lineage>
        <taxon>Bacteria</taxon>
        <taxon>Pseudomonadati</taxon>
        <taxon>Pseudomonadota</taxon>
        <taxon>Alphaproteobacteria</taxon>
        <taxon>Hyphomicrobiales</taxon>
        <taxon>Brucellaceae</taxon>
        <taxon>Brucella/Ochrobactrum group</taxon>
        <taxon>Brucella</taxon>
    </lineage>
</organism>
<feature type="chain" id="PRO_0000113546" description="Serine hydroxymethyltransferase">
    <location>
        <begin position="1"/>
        <end position="438"/>
    </location>
</feature>
<feature type="binding site" evidence="1">
    <location>
        <position position="133"/>
    </location>
    <ligand>
        <name>(6S)-5,6,7,8-tetrahydrofolate</name>
        <dbReference type="ChEBI" id="CHEBI:57453"/>
    </ligand>
</feature>
<feature type="binding site" evidence="1">
    <location>
        <begin position="137"/>
        <end position="139"/>
    </location>
    <ligand>
        <name>(6S)-5,6,7,8-tetrahydrofolate</name>
        <dbReference type="ChEBI" id="CHEBI:57453"/>
    </ligand>
</feature>
<feature type="site" description="Plays an important role in substrate specificity" evidence="1">
    <location>
        <position position="241"/>
    </location>
</feature>
<feature type="modified residue" description="N6-(pyridoxal phosphate)lysine" evidence="1">
    <location>
        <position position="242"/>
    </location>
</feature>
<dbReference type="EC" id="2.1.2.1" evidence="1"/>
<dbReference type="EMBL" id="AE014291">
    <property type="protein sequence ID" value="AAN29694.1"/>
    <property type="molecule type" value="Genomic_DNA"/>
</dbReference>
<dbReference type="EMBL" id="CP002997">
    <property type="protein sequence ID" value="AEM18111.1"/>
    <property type="molecule type" value="Genomic_DNA"/>
</dbReference>
<dbReference type="RefSeq" id="WP_004690736.1">
    <property type="nucleotide sequence ID" value="NZ_KN046804.1"/>
</dbReference>
<dbReference type="SMR" id="Q8G1F1"/>
<dbReference type="GeneID" id="55590479"/>
<dbReference type="KEGG" id="bms:BR0765"/>
<dbReference type="KEGG" id="bsi:BS1330_I0761"/>
<dbReference type="PATRIC" id="fig|204722.21.peg.2643"/>
<dbReference type="HOGENOM" id="CLU_022477_2_1_5"/>
<dbReference type="PhylomeDB" id="Q8G1F1"/>
<dbReference type="UniPathway" id="UPA00193"/>
<dbReference type="UniPathway" id="UPA00288">
    <property type="reaction ID" value="UER01023"/>
</dbReference>
<dbReference type="PRO" id="PR:Q8G1F1"/>
<dbReference type="Proteomes" id="UP000007104">
    <property type="component" value="Chromosome I"/>
</dbReference>
<dbReference type="GO" id="GO:0005829">
    <property type="term" value="C:cytosol"/>
    <property type="evidence" value="ECO:0007669"/>
    <property type="project" value="TreeGrafter"/>
</dbReference>
<dbReference type="GO" id="GO:0004372">
    <property type="term" value="F:glycine hydroxymethyltransferase activity"/>
    <property type="evidence" value="ECO:0007669"/>
    <property type="project" value="UniProtKB-UniRule"/>
</dbReference>
<dbReference type="GO" id="GO:0030170">
    <property type="term" value="F:pyridoxal phosphate binding"/>
    <property type="evidence" value="ECO:0007669"/>
    <property type="project" value="UniProtKB-UniRule"/>
</dbReference>
<dbReference type="GO" id="GO:0019264">
    <property type="term" value="P:glycine biosynthetic process from serine"/>
    <property type="evidence" value="ECO:0007669"/>
    <property type="project" value="UniProtKB-UniRule"/>
</dbReference>
<dbReference type="GO" id="GO:0035999">
    <property type="term" value="P:tetrahydrofolate interconversion"/>
    <property type="evidence" value="ECO:0007669"/>
    <property type="project" value="UniProtKB-UniRule"/>
</dbReference>
<dbReference type="CDD" id="cd00378">
    <property type="entry name" value="SHMT"/>
    <property type="match status" value="1"/>
</dbReference>
<dbReference type="FunFam" id="3.40.640.10:FF:000001">
    <property type="entry name" value="Serine hydroxymethyltransferase"/>
    <property type="match status" value="1"/>
</dbReference>
<dbReference type="FunFam" id="3.90.1150.10:FF:000003">
    <property type="entry name" value="Serine hydroxymethyltransferase"/>
    <property type="match status" value="1"/>
</dbReference>
<dbReference type="Gene3D" id="3.90.1150.10">
    <property type="entry name" value="Aspartate Aminotransferase, domain 1"/>
    <property type="match status" value="1"/>
</dbReference>
<dbReference type="Gene3D" id="3.40.640.10">
    <property type="entry name" value="Type I PLP-dependent aspartate aminotransferase-like (Major domain)"/>
    <property type="match status" value="1"/>
</dbReference>
<dbReference type="HAMAP" id="MF_00051">
    <property type="entry name" value="SHMT"/>
    <property type="match status" value="1"/>
</dbReference>
<dbReference type="InterPro" id="IPR015424">
    <property type="entry name" value="PyrdxlP-dep_Trfase"/>
</dbReference>
<dbReference type="InterPro" id="IPR015421">
    <property type="entry name" value="PyrdxlP-dep_Trfase_major"/>
</dbReference>
<dbReference type="InterPro" id="IPR015422">
    <property type="entry name" value="PyrdxlP-dep_Trfase_small"/>
</dbReference>
<dbReference type="InterPro" id="IPR001085">
    <property type="entry name" value="Ser_HO-MeTrfase"/>
</dbReference>
<dbReference type="InterPro" id="IPR049943">
    <property type="entry name" value="Ser_HO-MeTrfase-like"/>
</dbReference>
<dbReference type="InterPro" id="IPR019798">
    <property type="entry name" value="Ser_HO-MeTrfase_PLP_BS"/>
</dbReference>
<dbReference type="InterPro" id="IPR039429">
    <property type="entry name" value="SHMT-like_dom"/>
</dbReference>
<dbReference type="NCBIfam" id="NF000586">
    <property type="entry name" value="PRK00011.1"/>
    <property type="match status" value="1"/>
</dbReference>
<dbReference type="PANTHER" id="PTHR11680">
    <property type="entry name" value="SERINE HYDROXYMETHYLTRANSFERASE"/>
    <property type="match status" value="1"/>
</dbReference>
<dbReference type="PANTHER" id="PTHR11680:SF35">
    <property type="entry name" value="SERINE HYDROXYMETHYLTRANSFERASE 1"/>
    <property type="match status" value="1"/>
</dbReference>
<dbReference type="Pfam" id="PF00464">
    <property type="entry name" value="SHMT"/>
    <property type="match status" value="1"/>
</dbReference>
<dbReference type="PIRSF" id="PIRSF000412">
    <property type="entry name" value="SHMT"/>
    <property type="match status" value="1"/>
</dbReference>
<dbReference type="SUPFAM" id="SSF53383">
    <property type="entry name" value="PLP-dependent transferases"/>
    <property type="match status" value="1"/>
</dbReference>
<dbReference type="PROSITE" id="PS00096">
    <property type="entry name" value="SHMT"/>
    <property type="match status" value="1"/>
</dbReference>
<sequence length="438" mass="47131">MSQANAATKASSDVFFNASLEDIDPEIFGAIRNELGRQRHEIELIASENIVSRAVLEAQGSILTNKYAEGYPGKRYYGGCQYVDVVEELAIERAKKLFSAEFANVQPNSGSQMNQAVFLALLQPGDTFMGLDLNSGGHLTHGSPVNMSGKWFNVVSYGVRKDDHLLDMDEVARLARENKPKLILAGGTAYSRIWDWKRFREIADEVGAYLMVDMAHIAGLVAGGQHPSPVPHAHVCTTTTHKSLRGPRGGMILTNDADIAKKINSAVFPGLQGGPLMHVIAGKAVAFAEALKLEFKLYAKNVVDNARALAEELKSHGLDIVSGGTDNHLMLVDLRPKNATGKRAEAALGRANITCNKNGIPFDPEKPFVTSGVRLGTPAGTTRGFGVAEFKEIGSLIAEVLDGLKVANSDEGNAAVEQAVKEKVIALTGRFPMYGYQG</sequence>
<protein>
    <recommendedName>
        <fullName evidence="1">Serine hydroxymethyltransferase</fullName>
        <shortName evidence="1">SHMT</shortName>
        <shortName evidence="1">Serine methylase</shortName>
        <ecNumber evidence="1">2.1.2.1</ecNumber>
    </recommendedName>
</protein>
<evidence type="ECO:0000255" key="1">
    <source>
        <dbReference type="HAMAP-Rule" id="MF_00051"/>
    </source>
</evidence>
<accession>Q8G1F1</accession>
<accession>G0K8I4</accession>
<comment type="function">
    <text evidence="1">Catalyzes the reversible interconversion of serine and glycine with tetrahydrofolate (THF) serving as the one-carbon carrier. This reaction serves as the major source of one-carbon groups required for the biosynthesis of purines, thymidylate, methionine, and other important biomolecules. Also exhibits THF-independent aldolase activity toward beta-hydroxyamino acids, producing glycine and aldehydes, via a retro-aldol mechanism.</text>
</comment>
<comment type="catalytic activity">
    <reaction evidence="1">
        <text>(6R)-5,10-methylene-5,6,7,8-tetrahydrofolate + glycine + H2O = (6S)-5,6,7,8-tetrahydrofolate + L-serine</text>
        <dbReference type="Rhea" id="RHEA:15481"/>
        <dbReference type="ChEBI" id="CHEBI:15377"/>
        <dbReference type="ChEBI" id="CHEBI:15636"/>
        <dbReference type="ChEBI" id="CHEBI:33384"/>
        <dbReference type="ChEBI" id="CHEBI:57305"/>
        <dbReference type="ChEBI" id="CHEBI:57453"/>
        <dbReference type="EC" id="2.1.2.1"/>
    </reaction>
</comment>
<comment type="cofactor">
    <cofactor evidence="1">
        <name>pyridoxal 5'-phosphate</name>
        <dbReference type="ChEBI" id="CHEBI:597326"/>
    </cofactor>
</comment>
<comment type="pathway">
    <text evidence="1">One-carbon metabolism; tetrahydrofolate interconversion.</text>
</comment>
<comment type="pathway">
    <text evidence="1">Amino-acid biosynthesis; glycine biosynthesis; glycine from L-serine: step 1/1.</text>
</comment>
<comment type="subunit">
    <text evidence="1">Homodimer.</text>
</comment>
<comment type="subcellular location">
    <subcellularLocation>
        <location evidence="1">Cytoplasm</location>
    </subcellularLocation>
</comment>
<comment type="similarity">
    <text evidence="1">Belongs to the SHMT family.</text>
</comment>
<name>GLYA_BRUSU</name>
<reference key="1">
    <citation type="journal article" date="2002" name="Proc. Natl. Acad. Sci. U.S.A.">
        <title>The Brucella suis genome reveals fundamental similarities between animal and plant pathogens and symbionts.</title>
        <authorList>
            <person name="Paulsen I.T."/>
            <person name="Seshadri R."/>
            <person name="Nelson K.E."/>
            <person name="Eisen J.A."/>
            <person name="Heidelberg J.F."/>
            <person name="Read T.D."/>
            <person name="Dodson R.J."/>
            <person name="Umayam L.A."/>
            <person name="Brinkac L.M."/>
            <person name="Beanan M.J."/>
            <person name="Daugherty S.C."/>
            <person name="DeBoy R.T."/>
            <person name="Durkin A.S."/>
            <person name="Kolonay J.F."/>
            <person name="Madupu R."/>
            <person name="Nelson W.C."/>
            <person name="Ayodeji B."/>
            <person name="Kraul M."/>
            <person name="Shetty J."/>
            <person name="Malek J.A."/>
            <person name="Van Aken S.E."/>
            <person name="Riedmuller S."/>
            <person name="Tettelin H."/>
            <person name="Gill S.R."/>
            <person name="White O."/>
            <person name="Salzberg S.L."/>
            <person name="Hoover D.L."/>
            <person name="Lindler L.E."/>
            <person name="Halling S.M."/>
            <person name="Boyle S.M."/>
            <person name="Fraser C.M."/>
        </authorList>
    </citation>
    <scope>NUCLEOTIDE SEQUENCE [LARGE SCALE GENOMIC DNA]</scope>
    <source>
        <strain>1330</strain>
    </source>
</reference>
<reference key="2">
    <citation type="journal article" date="2011" name="J. Bacteriol.">
        <title>Revised genome sequence of Brucella suis 1330.</title>
        <authorList>
            <person name="Tae H."/>
            <person name="Shallom S."/>
            <person name="Settlage R."/>
            <person name="Preston D."/>
            <person name="Adams L.G."/>
            <person name="Garner H.R."/>
        </authorList>
    </citation>
    <scope>NUCLEOTIDE SEQUENCE [LARGE SCALE GENOMIC DNA]</scope>
    <source>
        <strain>1330</strain>
    </source>
</reference>
<gene>
    <name evidence="1" type="primary">glyA</name>
    <name type="ordered locus">BS1330_I0761</name>
    <name type="ordered locus">BR0765</name>
</gene>
<keyword id="KW-0028">Amino-acid biosynthesis</keyword>
<keyword id="KW-0963">Cytoplasm</keyword>
<keyword id="KW-0554">One-carbon metabolism</keyword>
<keyword id="KW-0663">Pyridoxal phosphate</keyword>
<keyword id="KW-0808">Transferase</keyword>
<proteinExistence type="inferred from homology"/>